<accession>O83809</accession>
<keyword id="KW-0030">Aminoacyl-tRNA synthetase</keyword>
<keyword id="KW-0067">ATP-binding</keyword>
<keyword id="KW-0963">Cytoplasm</keyword>
<keyword id="KW-0436">Ligase</keyword>
<keyword id="KW-0479">Metal-binding</keyword>
<keyword id="KW-0547">Nucleotide-binding</keyword>
<keyword id="KW-0648">Protein biosynthesis</keyword>
<keyword id="KW-1185">Reference proteome</keyword>
<keyword id="KW-0694">RNA-binding</keyword>
<keyword id="KW-0820">tRNA-binding</keyword>
<keyword id="KW-0862">Zinc</keyword>
<comment type="function">
    <text evidence="1">Catalyzes the attachment of threonine to tRNA(Thr) in a two-step reaction: L-threonine is first activated by ATP to form Thr-AMP and then transferred to the acceptor end of tRNA(Thr). Also edits incorrectly charged L-seryl-tRNA(Thr).</text>
</comment>
<comment type="catalytic activity">
    <reaction evidence="1">
        <text>tRNA(Thr) + L-threonine + ATP = L-threonyl-tRNA(Thr) + AMP + diphosphate + H(+)</text>
        <dbReference type="Rhea" id="RHEA:24624"/>
        <dbReference type="Rhea" id="RHEA-COMP:9670"/>
        <dbReference type="Rhea" id="RHEA-COMP:9704"/>
        <dbReference type="ChEBI" id="CHEBI:15378"/>
        <dbReference type="ChEBI" id="CHEBI:30616"/>
        <dbReference type="ChEBI" id="CHEBI:33019"/>
        <dbReference type="ChEBI" id="CHEBI:57926"/>
        <dbReference type="ChEBI" id="CHEBI:78442"/>
        <dbReference type="ChEBI" id="CHEBI:78534"/>
        <dbReference type="ChEBI" id="CHEBI:456215"/>
        <dbReference type="EC" id="6.1.1.3"/>
    </reaction>
</comment>
<comment type="cofactor">
    <cofactor evidence="1">
        <name>Zn(2+)</name>
        <dbReference type="ChEBI" id="CHEBI:29105"/>
    </cofactor>
    <text evidence="1">Binds 1 zinc ion per subunit.</text>
</comment>
<comment type="subunit">
    <text evidence="1">Homodimer.</text>
</comment>
<comment type="subcellular location">
    <subcellularLocation>
        <location evidence="1">Cytoplasm</location>
    </subcellularLocation>
</comment>
<comment type="similarity">
    <text evidence="1">Belongs to the class-II aminoacyl-tRNA synthetase family.</text>
</comment>
<name>SYT_TREPA</name>
<gene>
    <name evidence="1" type="primary">thrS</name>
    <name type="ordered locus">TP_0837</name>
</gene>
<sequence length="592" mass="67399">MGLCVEENITMLQKRSDTLDRLRHSLAHVMAEAVQALFPGTKLAVGPPIDYGFYYDFSPPRPLCDADLAPIEEKMRAILRAGCPFVKEVVSRPDALARFKDEPFKQELIERISADDTLSLYHSGAFTDLCRGPHVQSMRDINPHAFKLTSIAGAYWRGNERGPQLTRIYGTAWESEEDLHTYLRMQDEAKRRDHRKLGPALGLFHLDEENPGQVFWHPEGWTLYVAIQQYLRRVMHEDGYAEVHTPFVMPQSLWERSGHWDKYRANMYLTEGEKRSFALKPMNCPGHVEIFKQKTRSYRDLPLRLSEFGSCTRNEPSGSLHGVMRVRGFVQDDAHIFCTEAQIASEVTRFCRLLARVYADFGFAQEQIRVKFSTRPEQRIGDDATWDRAERALAEACEAAGLSYEHAPGEGAFYGPKLEFALIDTLEREWQCGTIQVDYQLPSCERLNAEYVGEDNQRHMPVILHRTVIGSLERFIGILIEHYGGAFPPWLAPVQAVVIPVAPAFLEYAQHVARELCARSLRVQADVSAERMNAKIRTAQTQKVPYLLIVGERELRAQQVAVRPRTGPQHSMGLSAFSTFLLAKLETRALHA</sequence>
<proteinExistence type="inferred from homology"/>
<evidence type="ECO:0000255" key="1">
    <source>
        <dbReference type="HAMAP-Rule" id="MF_00184"/>
    </source>
</evidence>
<reference key="1">
    <citation type="journal article" date="1998" name="Science">
        <title>Complete genome sequence of Treponema pallidum, the syphilis spirochete.</title>
        <authorList>
            <person name="Fraser C.M."/>
            <person name="Norris S.J."/>
            <person name="Weinstock G.M."/>
            <person name="White O."/>
            <person name="Sutton G.G."/>
            <person name="Dodson R.J."/>
            <person name="Gwinn M.L."/>
            <person name="Hickey E.K."/>
            <person name="Clayton R.A."/>
            <person name="Ketchum K.A."/>
            <person name="Sodergren E."/>
            <person name="Hardham J.M."/>
            <person name="McLeod M.P."/>
            <person name="Salzberg S.L."/>
            <person name="Peterson J.D."/>
            <person name="Khalak H.G."/>
            <person name="Richardson D.L."/>
            <person name="Howell J.K."/>
            <person name="Chidambaram M."/>
            <person name="Utterback T.R."/>
            <person name="McDonald L.A."/>
            <person name="Artiach P."/>
            <person name="Bowman C."/>
            <person name="Cotton M.D."/>
            <person name="Fujii C."/>
            <person name="Garland S.A."/>
            <person name="Hatch B."/>
            <person name="Horst K."/>
            <person name="Roberts K.M."/>
            <person name="Sandusky M."/>
            <person name="Weidman J.F."/>
            <person name="Smith H.O."/>
            <person name="Venter J.C."/>
        </authorList>
    </citation>
    <scope>NUCLEOTIDE SEQUENCE [LARGE SCALE GENOMIC DNA]</scope>
    <source>
        <strain>Nichols</strain>
    </source>
</reference>
<protein>
    <recommendedName>
        <fullName evidence="1">Threonine--tRNA ligase</fullName>
        <ecNumber evidence="1">6.1.1.3</ecNumber>
    </recommendedName>
    <alternativeName>
        <fullName evidence="1">Threonyl-tRNA synthetase</fullName>
        <shortName evidence="1">ThrRS</shortName>
    </alternativeName>
</protein>
<feature type="chain" id="PRO_0000101078" description="Threonine--tRNA ligase">
    <location>
        <begin position="1"/>
        <end position="592"/>
    </location>
</feature>
<feature type="region of interest" description="Catalytic" evidence="1">
    <location>
        <begin position="193"/>
        <end position="488"/>
    </location>
</feature>
<feature type="binding site" evidence="1">
    <location>
        <position position="284"/>
    </location>
    <ligand>
        <name>Zn(2+)</name>
        <dbReference type="ChEBI" id="CHEBI:29105"/>
    </ligand>
</feature>
<feature type="binding site" evidence="1">
    <location>
        <position position="335"/>
    </location>
    <ligand>
        <name>Zn(2+)</name>
        <dbReference type="ChEBI" id="CHEBI:29105"/>
    </ligand>
</feature>
<feature type="binding site" evidence="1">
    <location>
        <position position="465"/>
    </location>
    <ligand>
        <name>Zn(2+)</name>
        <dbReference type="ChEBI" id="CHEBI:29105"/>
    </ligand>
</feature>
<dbReference type="EC" id="6.1.1.3" evidence="1"/>
<dbReference type="EMBL" id="AE000520">
    <property type="protein sequence ID" value="AAC65804.1"/>
    <property type="molecule type" value="Genomic_DNA"/>
</dbReference>
<dbReference type="PIR" id="B71275">
    <property type="entry name" value="B71275"/>
</dbReference>
<dbReference type="SMR" id="O83809"/>
<dbReference type="STRING" id="243276.TP_0837"/>
<dbReference type="EnsemblBacteria" id="AAC65804">
    <property type="protein sequence ID" value="AAC65804"/>
    <property type="gene ID" value="TP_0837"/>
</dbReference>
<dbReference type="KEGG" id="tpa:TP_0837"/>
<dbReference type="KEGG" id="tpw:TPANIC_0837"/>
<dbReference type="eggNOG" id="COG0441">
    <property type="taxonomic scope" value="Bacteria"/>
</dbReference>
<dbReference type="HOGENOM" id="CLU_008554_0_1_12"/>
<dbReference type="OrthoDB" id="9802304at2"/>
<dbReference type="Proteomes" id="UP000000811">
    <property type="component" value="Chromosome"/>
</dbReference>
<dbReference type="GO" id="GO:0005737">
    <property type="term" value="C:cytoplasm"/>
    <property type="evidence" value="ECO:0007669"/>
    <property type="project" value="UniProtKB-SubCell"/>
</dbReference>
<dbReference type="GO" id="GO:0005524">
    <property type="term" value="F:ATP binding"/>
    <property type="evidence" value="ECO:0007669"/>
    <property type="project" value="UniProtKB-UniRule"/>
</dbReference>
<dbReference type="GO" id="GO:0046872">
    <property type="term" value="F:metal ion binding"/>
    <property type="evidence" value="ECO:0007669"/>
    <property type="project" value="UniProtKB-KW"/>
</dbReference>
<dbReference type="GO" id="GO:0004829">
    <property type="term" value="F:threonine-tRNA ligase activity"/>
    <property type="evidence" value="ECO:0007669"/>
    <property type="project" value="UniProtKB-UniRule"/>
</dbReference>
<dbReference type="GO" id="GO:0000049">
    <property type="term" value="F:tRNA binding"/>
    <property type="evidence" value="ECO:0007669"/>
    <property type="project" value="UniProtKB-KW"/>
</dbReference>
<dbReference type="GO" id="GO:0006435">
    <property type="term" value="P:threonyl-tRNA aminoacylation"/>
    <property type="evidence" value="ECO:0007669"/>
    <property type="project" value="UniProtKB-UniRule"/>
</dbReference>
<dbReference type="CDD" id="cd00860">
    <property type="entry name" value="ThrRS_anticodon"/>
    <property type="match status" value="1"/>
</dbReference>
<dbReference type="CDD" id="cd00771">
    <property type="entry name" value="ThrRS_core"/>
    <property type="match status" value="1"/>
</dbReference>
<dbReference type="FunFam" id="3.30.54.20:FF:000002">
    <property type="entry name" value="Threonine--tRNA ligase"/>
    <property type="match status" value="1"/>
</dbReference>
<dbReference type="FunFam" id="3.30.930.10:FF:000002">
    <property type="entry name" value="Threonine--tRNA ligase"/>
    <property type="match status" value="1"/>
</dbReference>
<dbReference type="FunFam" id="3.40.50.800:FF:000001">
    <property type="entry name" value="Threonine--tRNA ligase"/>
    <property type="match status" value="1"/>
</dbReference>
<dbReference type="FunFam" id="3.30.980.10:FF:000005">
    <property type="entry name" value="Threonyl-tRNA synthetase, mitochondrial"/>
    <property type="match status" value="1"/>
</dbReference>
<dbReference type="Gene3D" id="3.30.54.20">
    <property type="match status" value="1"/>
</dbReference>
<dbReference type="Gene3D" id="3.40.50.800">
    <property type="entry name" value="Anticodon-binding domain"/>
    <property type="match status" value="1"/>
</dbReference>
<dbReference type="Gene3D" id="3.30.930.10">
    <property type="entry name" value="Bira Bifunctional Protein, Domain 2"/>
    <property type="match status" value="1"/>
</dbReference>
<dbReference type="Gene3D" id="3.30.980.10">
    <property type="entry name" value="Threonyl-trna Synthetase, Chain A, domain 2"/>
    <property type="match status" value="1"/>
</dbReference>
<dbReference type="HAMAP" id="MF_00184">
    <property type="entry name" value="Thr_tRNA_synth"/>
    <property type="match status" value="1"/>
</dbReference>
<dbReference type="InterPro" id="IPR002314">
    <property type="entry name" value="aa-tRNA-synt_IIb"/>
</dbReference>
<dbReference type="InterPro" id="IPR006195">
    <property type="entry name" value="aa-tRNA-synth_II"/>
</dbReference>
<dbReference type="InterPro" id="IPR045864">
    <property type="entry name" value="aa-tRNA-synth_II/BPL/LPL"/>
</dbReference>
<dbReference type="InterPro" id="IPR004154">
    <property type="entry name" value="Anticodon-bd"/>
</dbReference>
<dbReference type="InterPro" id="IPR036621">
    <property type="entry name" value="Anticodon-bd_dom_sf"/>
</dbReference>
<dbReference type="InterPro" id="IPR002320">
    <property type="entry name" value="Thr-tRNA-ligase_IIa"/>
</dbReference>
<dbReference type="InterPro" id="IPR018163">
    <property type="entry name" value="Thr/Ala-tRNA-synth_IIc_edit"/>
</dbReference>
<dbReference type="InterPro" id="IPR047246">
    <property type="entry name" value="ThrRS_anticodon"/>
</dbReference>
<dbReference type="InterPro" id="IPR033728">
    <property type="entry name" value="ThrRS_core"/>
</dbReference>
<dbReference type="InterPro" id="IPR012947">
    <property type="entry name" value="tRNA_SAD"/>
</dbReference>
<dbReference type="NCBIfam" id="TIGR00418">
    <property type="entry name" value="thrS"/>
    <property type="match status" value="1"/>
</dbReference>
<dbReference type="PANTHER" id="PTHR11451:SF44">
    <property type="entry name" value="THREONINE--TRNA LIGASE, CHLOROPLASTIC_MITOCHONDRIAL 2"/>
    <property type="match status" value="1"/>
</dbReference>
<dbReference type="PANTHER" id="PTHR11451">
    <property type="entry name" value="THREONINE-TRNA LIGASE"/>
    <property type="match status" value="1"/>
</dbReference>
<dbReference type="Pfam" id="PF03129">
    <property type="entry name" value="HGTP_anticodon"/>
    <property type="match status" value="1"/>
</dbReference>
<dbReference type="Pfam" id="PF00587">
    <property type="entry name" value="tRNA-synt_2b"/>
    <property type="match status" value="1"/>
</dbReference>
<dbReference type="Pfam" id="PF07973">
    <property type="entry name" value="tRNA_SAD"/>
    <property type="match status" value="1"/>
</dbReference>
<dbReference type="PRINTS" id="PR01047">
    <property type="entry name" value="TRNASYNTHTHR"/>
</dbReference>
<dbReference type="SMART" id="SM00863">
    <property type="entry name" value="tRNA_SAD"/>
    <property type="match status" value="1"/>
</dbReference>
<dbReference type="SUPFAM" id="SSF52954">
    <property type="entry name" value="Class II aaRS ABD-related"/>
    <property type="match status" value="1"/>
</dbReference>
<dbReference type="SUPFAM" id="SSF55681">
    <property type="entry name" value="Class II aaRS and biotin synthetases"/>
    <property type="match status" value="1"/>
</dbReference>
<dbReference type="SUPFAM" id="SSF55186">
    <property type="entry name" value="ThrRS/AlaRS common domain"/>
    <property type="match status" value="1"/>
</dbReference>
<dbReference type="PROSITE" id="PS50862">
    <property type="entry name" value="AA_TRNA_LIGASE_II"/>
    <property type="match status" value="1"/>
</dbReference>
<organism>
    <name type="scientific">Treponema pallidum (strain Nichols)</name>
    <dbReference type="NCBI Taxonomy" id="243276"/>
    <lineage>
        <taxon>Bacteria</taxon>
        <taxon>Pseudomonadati</taxon>
        <taxon>Spirochaetota</taxon>
        <taxon>Spirochaetia</taxon>
        <taxon>Spirochaetales</taxon>
        <taxon>Treponemataceae</taxon>
        <taxon>Treponema</taxon>
    </lineage>
</organism>